<protein>
    <recommendedName>
        <fullName evidence="5">Lactamase-like protein ptaB</fullName>
        <ecNumber evidence="7">3.1.2.-</ecNumber>
    </recommendedName>
    <alternativeName>
        <fullName evidence="5">Pestheic acid biosynthesis cluster protein B</fullName>
    </alternativeName>
</protein>
<gene>
    <name evidence="5" type="primary">ptaB</name>
    <name type="ORF">PFICI_10825</name>
</gene>
<proteinExistence type="evidence at transcript level"/>
<sequence>MVGKGGYRQINKALNICAFEDYLDGQQKSLPPLNDVEQISPNVLRVLGQNPGKFTLQGTNTYIIGTGEKRLLIDTGQGIPEWADLISSTLANSSIRLSAVLLSHWHGDHTGGVPDLLRLYPHLSDSIYKHSPSKGQQPIEDGQVFEVEGATVRAVHAPGHSHDHMCFVIEEENAMFTGDNVLGHGTAAVELLSTWMATLRLMQSHNCGRGYPAHGEVIPNLNAKISGELASKERRERQVLQHLNRIRKEEQGGKGSATVQRLVVEMYGDTDQQMREQALEPFIDEVLRKLAEDEKVAFQLRAGEKTWFAIALE</sequence>
<accession>A0A067XMV3</accession>
<accession>W3WVS2</accession>
<dbReference type="EC" id="3.1.2.-" evidence="7"/>
<dbReference type="EMBL" id="KC145148">
    <property type="protein sequence ID" value="AGO59041.1"/>
    <property type="molecule type" value="Genomic_DNA"/>
</dbReference>
<dbReference type="EMBL" id="KI912116">
    <property type="protein sequence ID" value="ETS76951.1"/>
    <property type="molecule type" value="Genomic_DNA"/>
</dbReference>
<dbReference type="RefSeq" id="XP_007837597.1">
    <property type="nucleotide sequence ID" value="XM_007839406.1"/>
</dbReference>
<dbReference type="SMR" id="A0A067XMV3"/>
<dbReference type="STRING" id="1229662.A0A067XMV3"/>
<dbReference type="GeneID" id="19275838"/>
<dbReference type="KEGG" id="pfy:PFICI_10825"/>
<dbReference type="eggNOG" id="KOG0813">
    <property type="taxonomic scope" value="Eukaryota"/>
</dbReference>
<dbReference type="InParanoid" id="A0A067XMV3"/>
<dbReference type="OMA" id="QLVTAMH"/>
<dbReference type="OrthoDB" id="17458at2759"/>
<dbReference type="Proteomes" id="UP000030651">
    <property type="component" value="Unassembled WGS sequence"/>
</dbReference>
<dbReference type="GO" id="GO:0016787">
    <property type="term" value="F:hydrolase activity"/>
    <property type="evidence" value="ECO:0007669"/>
    <property type="project" value="UniProtKB-KW"/>
</dbReference>
<dbReference type="GO" id="GO:0046872">
    <property type="term" value="F:metal ion binding"/>
    <property type="evidence" value="ECO:0007669"/>
    <property type="project" value="UniProtKB-KW"/>
</dbReference>
<dbReference type="GO" id="GO:0044550">
    <property type="term" value="P:secondary metabolite biosynthetic process"/>
    <property type="evidence" value="ECO:0007669"/>
    <property type="project" value="UniProtKB-ARBA"/>
</dbReference>
<dbReference type="CDD" id="cd07722">
    <property type="entry name" value="LACTB2-like_MBL-fold"/>
    <property type="match status" value="1"/>
</dbReference>
<dbReference type="FunFam" id="3.60.15.10:FF:000041">
    <property type="entry name" value="Metallo-beta-lactamase domain protein"/>
    <property type="match status" value="1"/>
</dbReference>
<dbReference type="Gene3D" id="3.60.15.10">
    <property type="entry name" value="Ribonuclease Z/Hydroxyacylglutathione hydrolase-like"/>
    <property type="match status" value="1"/>
</dbReference>
<dbReference type="Gene3D" id="1.10.10.10">
    <property type="entry name" value="Winged helix-like DNA-binding domain superfamily/Winged helix DNA-binding domain"/>
    <property type="match status" value="1"/>
</dbReference>
<dbReference type="InterPro" id="IPR047921">
    <property type="entry name" value="LACTB2-like_MBL-fold"/>
</dbReference>
<dbReference type="InterPro" id="IPR001279">
    <property type="entry name" value="Metallo-B-lactamas"/>
</dbReference>
<dbReference type="InterPro" id="IPR036866">
    <property type="entry name" value="RibonucZ/Hydroxyglut_hydro"/>
</dbReference>
<dbReference type="InterPro" id="IPR050662">
    <property type="entry name" value="Sec-metab_biosynth-thioest"/>
</dbReference>
<dbReference type="InterPro" id="IPR036388">
    <property type="entry name" value="WH-like_DNA-bd_sf"/>
</dbReference>
<dbReference type="PANTHER" id="PTHR23131:SF3">
    <property type="entry name" value="ATROCHRYSONE CARBOXYL ACP THIOESTERASE"/>
    <property type="match status" value="1"/>
</dbReference>
<dbReference type="PANTHER" id="PTHR23131">
    <property type="entry name" value="ENDORIBONUCLEASE LACTB2"/>
    <property type="match status" value="1"/>
</dbReference>
<dbReference type="Pfam" id="PF00753">
    <property type="entry name" value="Lactamase_B"/>
    <property type="match status" value="1"/>
</dbReference>
<dbReference type="SMART" id="SM00849">
    <property type="entry name" value="Lactamase_B"/>
    <property type="match status" value="1"/>
</dbReference>
<dbReference type="SUPFAM" id="SSF56281">
    <property type="entry name" value="Metallo-hydrolase/oxidoreductase"/>
    <property type="match status" value="1"/>
</dbReference>
<keyword id="KW-0378">Hydrolase</keyword>
<keyword id="KW-0479">Metal-binding</keyword>
<keyword id="KW-1185">Reference proteome</keyword>
<keyword id="KW-0862">Zinc</keyword>
<organism>
    <name type="scientific">Pestalotiopsis fici (strain W106-1 / CGMCC3.15140)</name>
    <dbReference type="NCBI Taxonomy" id="1229662"/>
    <lineage>
        <taxon>Eukaryota</taxon>
        <taxon>Fungi</taxon>
        <taxon>Dikarya</taxon>
        <taxon>Ascomycota</taxon>
        <taxon>Pezizomycotina</taxon>
        <taxon>Sordariomycetes</taxon>
        <taxon>Xylariomycetidae</taxon>
        <taxon>Amphisphaeriales</taxon>
        <taxon>Sporocadaceae</taxon>
        <taxon>Pestalotiopsis</taxon>
    </lineage>
</organism>
<comment type="function">
    <text evidence="3">Lactamase-like protein; part of the gene cluster that mediates the biosynthesis of pestheic acid, a diphenyl ether which is a biosynthetic precursor of the unique chloropupukeananes (PubMed:24302702). The biosynthesis initiates from condensation of acetate and malonate units catalyzed by the non-reducing PKS ptaA (PubMed:24302702). As the ptaA protein is TE/CLC domain-deficient, hydrolysis and Claisen cyclization of the polyketide could be catalyzed by ptaB containing a beta-lactamase domain (PubMed:24302702). The ptaB protein might hydrolyze the thioester bond between the ACP of ptaA and the intermediate to release atrochrysone carboxylic acid, which is spontaneously dehydrated to form endocrocin anthrone (PubMed:24302702). Endocrocin anthrone is then converted to endocrocin, catalyzed by the anthrone oxygenase ptaC (PubMed:24302702). Spontaneous decarboxylation of endocrocin occurs to generate emodin (PubMed:24302702). An O-methyltransferase (ptaH or ptaI) could methylate emodin to form physcion (PubMed:24302702). PtaJ could then catalyze the oxidative cleavage of physcion, and rotation of the intermediate could then afford desmethylisosulochrin (PubMed:24302702). PtaF, a putative NADH-dependent oxidoreductase, might also participate in the oxidative cleavage step (PubMed:24302702). Desmethylisosulochrin is then transformed by another O-methyltransferase (ptaH or ptaI) to form isosulochrin (PubMed:24302702). Chlorination of isosulochrin by ptaM in the cyclohexadienone B ring then produces chloroisosulochrin (PubMed:24302702). PtaE is responsible for the oxidative coupling reactions of both benzophenones isosulochrin and chloroisosulochrin to RES-1214-1 and pestheic acid respectively, regardless of chlorination.</text>
</comment>
<comment type="catalytic activity">
    <reaction evidence="7">
        <text>atrochrysone carboxyl-[ACP] + H2O = atrochrysone carboxylate + holo-[ACP] + H(+)</text>
        <dbReference type="Rhea" id="RHEA:64236"/>
        <dbReference type="Rhea" id="RHEA-COMP:9685"/>
        <dbReference type="Rhea" id="RHEA-COMP:16552"/>
        <dbReference type="ChEBI" id="CHEBI:15377"/>
        <dbReference type="ChEBI" id="CHEBI:15378"/>
        <dbReference type="ChEBI" id="CHEBI:64479"/>
        <dbReference type="ChEBI" id="CHEBI:149712"/>
        <dbReference type="ChEBI" id="CHEBI:149713"/>
    </reaction>
    <physiologicalReaction direction="left-to-right" evidence="7">
        <dbReference type="Rhea" id="RHEA:64237"/>
    </physiologicalReaction>
</comment>
<comment type="cofactor">
    <cofactor evidence="1">
        <name>Zn(2+)</name>
        <dbReference type="ChEBI" id="CHEBI:29105"/>
    </cofactor>
    <text evidence="1">Binds 2 Zn(2+) ions per subunit.</text>
</comment>
<comment type="pathway">
    <text evidence="7">Secondary metabolite biosynthesis.</text>
</comment>
<comment type="induction">
    <text evidence="4 7">The cluster is expressed in rice fermentation medium (PubMed:25623211). Three regulators are located in the cluster (ptaR1, ptaR2 and ptaR3), suggesting that the production of pestheic acid is controlled by a complex regulatory mechanism (PubMed:24302702).</text>
</comment>
<comment type="similarity">
    <text evidence="6">Belongs to the metallo-beta-lactamase superfamily.</text>
</comment>
<feature type="chain" id="PRO_0000443039" description="Lactamase-like protein ptaB">
    <location>
        <begin position="1"/>
        <end position="313"/>
    </location>
</feature>
<feature type="active site" description="Proton donor/acceptor" evidence="2">
    <location>
        <position position="108"/>
    </location>
</feature>
<feature type="binding site" evidence="1">
    <location>
        <position position="104"/>
    </location>
    <ligand>
        <name>Zn(2+)</name>
        <dbReference type="ChEBI" id="CHEBI:29105"/>
        <label>1</label>
        <note>catalytic</note>
    </ligand>
</feature>
<feature type="binding site" evidence="1">
    <location>
        <position position="106"/>
    </location>
    <ligand>
        <name>Zn(2+)</name>
        <dbReference type="ChEBI" id="CHEBI:29105"/>
        <label>1</label>
        <note>catalytic</note>
    </ligand>
</feature>
<feature type="binding site" evidence="1">
    <location>
        <position position="108"/>
    </location>
    <ligand>
        <name>Zn(2+)</name>
        <dbReference type="ChEBI" id="CHEBI:29105"/>
        <label>2</label>
        <note>catalytic</note>
    </ligand>
</feature>
<feature type="binding site" evidence="1">
    <location>
        <position position="109"/>
    </location>
    <ligand>
        <name>Zn(2+)</name>
        <dbReference type="ChEBI" id="CHEBI:29105"/>
        <label>2</label>
        <note>catalytic</note>
    </ligand>
</feature>
<name>PTAB_PESFW</name>
<evidence type="ECO:0000250" key="1">
    <source>
        <dbReference type="UniProtKB" id="Q988B9"/>
    </source>
</evidence>
<evidence type="ECO:0000255" key="2"/>
<evidence type="ECO:0000269" key="3">
    <source>
    </source>
</evidence>
<evidence type="ECO:0000269" key="4">
    <source>
    </source>
</evidence>
<evidence type="ECO:0000303" key="5">
    <source>
    </source>
</evidence>
<evidence type="ECO:0000305" key="6"/>
<evidence type="ECO:0000305" key="7">
    <source>
    </source>
</evidence>
<reference key="1">
    <citation type="journal article" date="2014" name="ChemBioChem">
        <title>Identification of the first diphenyl ether gene cluster for pestheic acid biosynthesis in plant endophyte Pestalotiopsis fici.</title>
        <authorList>
            <person name="Xu X."/>
            <person name="Liu L."/>
            <person name="Zhang F."/>
            <person name="Wang W."/>
            <person name="Li J."/>
            <person name="Guo L."/>
            <person name="Che Y."/>
            <person name="Liu G."/>
        </authorList>
    </citation>
    <scope>NUCLEOTIDE SEQUENCE [GENOMIC DNA]</scope>
    <scope>FUNCTION</scope>
    <scope>INDUCTION</scope>
    <source>
        <strain>W106-1 / CGMCC3.15140</strain>
    </source>
</reference>
<reference key="2">
    <citation type="journal article" date="2015" name="BMC Genomics">
        <title>Genomic and transcriptomic analysis of the endophytic fungus Pestalotiopsis fici reveals its lifestyle and high potential for synthesis of natural products.</title>
        <authorList>
            <person name="Wang X."/>
            <person name="Zhang X."/>
            <person name="Liu L."/>
            <person name="Xiang M."/>
            <person name="Wang W."/>
            <person name="Sun X."/>
            <person name="Che Y."/>
            <person name="Guo L."/>
            <person name="Liu G."/>
            <person name="Guo L."/>
            <person name="Wang C."/>
            <person name="Yin W.B."/>
            <person name="Stadler M."/>
            <person name="Zhang X."/>
            <person name="Liu X."/>
        </authorList>
    </citation>
    <scope>NUCLEOTIDE SEQUENCE [LARGE SCALE GENOMIC DNA]</scope>
    <scope>INDUCTION</scope>
    <source>
        <strain>W106-1 / CGMCC3.15140</strain>
    </source>
</reference>